<keyword id="KW-1185">Reference proteome</keyword>
<name>YOSB_BACSU</name>
<proteinExistence type="predicted"/>
<sequence>MNMFVIAAKSEGKYLYGYHPHIYSNLKQAENALKTMRKNGKLTERDKVYGLDGLMLVDL</sequence>
<feature type="chain" id="PRO_0000369128" description="SPbeta prophage-derived uncharacterized protein YosB">
    <location>
        <begin position="1"/>
        <end position="59"/>
    </location>
</feature>
<protein>
    <recommendedName>
        <fullName>SPbeta prophage-derived uncharacterized protein YosB</fullName>
    </recommendedName>
</protein>
<reference key="1">
    <citation type="journal article" date="1997" name="Nature">
        <title>The complete genome sequence of the Gram-positive bacterium Bacillus subtilis.</title>
        <authorList>
            <person name="Kunst F."/>
            <person name="Ogasawara N."/>
            <person name="Moszer I."/>
            <person name="Albertini A.M."/>
            <person name="Alloni G."/>
            <person name="Azevedo V."/>
            <person name="Bertero M.G."/>
            <person name="Bessieres P."/>
            <person name="Bolotin A."/>
            <person name="Borchert S."/>
            <person name="Borriss R."/>
            <person name="Boursier L."/>
            <person name="Brans A."/>
            <person name="Braun M."/>
            <person name="Brignell S.C."/>
            <person name="Bron S."/>
            <person name="Brouillet S."/>
            <person name="Bruschi C.V."/>
            <person name="Caldwell B."/>
            <person name="Capuano V."/>
            <person name="Carter N.M."/>
            <person name="Choi S.-K."/>
            <person name="Codani J.-J."/>
            <person name="Connerton I.F."/>
            <person name="Cummings N.J."/>
            <person name="Daniel R.A."/>
            <person name="Denizot F."/>
            <person name="Devine K.M."/>
            <person name="Duesterhoeft A."/>
            <person name="Ehrlich S.D."/>
            <person name="Emmerson P.T."/>
            <person name="Entian K.-D."/>
            <person name="Errington J."/>
            <person name="Fabret C."/>
            <person name="Ferrari E."/>
            <person name="Foulger D."/>
            <person name="Fritz C."/>
            <person name="Fujita M."/>
            <person name="Fujita Y."/>
            <person name="Fuma S."/>
            <person name="Galizzi A."/>
            <person name="Galleron N."/>
            <person name="Ghim S.-Y."/>
            <person name="Glaser P."/>
            <person name="Goffeau A."/>
            <person name="Golightly E.J."/>
            <person name="Grandi G."/>
            <person name="Guiseppi G."/>
            <person name="Guy B.J."/>
            <person name="Haga K."/>
            <person name="Haiech J."/>
            <person name="Harwood C.R."/>
            <person name="Henaut A."/>
            <person name="Hilbert H."/>
            <person name="Holsappel S."/>
            <person name="Hosono S."/>
            <person name="Hullo M.-F."/>
            <person name="Itaya M."/>
            <person name="Jones L.-M."/>
            <person name="Joris B."/>
            <person name="Karamata D."/>
            <person name="Kasahara Y."/>
            <person name="Klaerr-Blanchard M."/>
            <person name="Klein C."/>
            <person name="Kobayashi Y."/>
            <person name="Koetter P."/>
            <person name="Koningstein G."/>
            <person name="Krogh S."/>
            <person name="Kumano M."/>
            <person name="Kurita K."/>
            <person name="Lapidus A."/>
            <person name="Lardinois S."/>
            <person name="Lauber J."/>
            <person name="Lazarevic V."/>
            <person name="Lee S.-M."/>
            <person name="Levine A."/>
            <person name="Liu H."/>
            <person name="Masuda S."/>
            <person name="Mauel C."/>
            <person name="Medigue C."/>
            <person name="Medina N."/>
            <person name="Mellado R.P."/>
            <person name="Mizuno M."/>
            <person name="Moestl D."/>
            <person name="Nakai S."/>
            <person name="Noback M."/>
            <person name="Noone D."/>
            <person name="O'Reilly M."/>
            <person name="Ogawa K."/>
            <person name="Ogiwara A."/>
            <person name="Oudega B."/>
            <person name="Park S.-H."/>
            <person name="Parro V."/>
            <person name="Pohl T.M."/>
            <person name="Portetelle D."/>
            <person name="Porwollik S."/>
            <person name="Prescott A.M."/>
            <person name="Presecan E."/>
            <person name="Pujic P."/>
            <person name="Purnelle B."/>
            <person name="Rapoport G."/>
            <person name="Rey M."/>
            <person name="Reynolds S."/>
            <person name="Rieger M."/>
            <person name="Rivolta C."/>
            <person name="Rocha E."/>
            <person name="Roche B."/>
            <person name="Rose M."/>
            <person name="Sadaie Y."/>
            <person name="Sato T."/>
            <person name="Scanlan E."/>
            <person name="Schleich S."/>
            <person name="Schroeter R."/>
            <person name="Scoffone F."/>
            <person name="Sekiguchi J."/>
            <person name="Sekowska A."/>
            <person name="Seror S.J."/>
            <person name="Serror P."/>
            <person name="Shin B.-S."/>
            <person name="Soldo B."/>
            <person name="Sorokin A."/>
            <person name="Tacconi E."/>
            <person name="Takagi T."/>
            <person name="Takahashi H."/>
            <person name="Takemaru K."/>
            <person name="Takeuchi M."/>
            <person name="Tamakoshi A."/>
            <person name="Tanaka T."/>
            <person name="Terpstra P."/>
            <person name="Tognoni A."/>
            <person name="Tosato V."/>
            <person name="Uchiyama S."/>
            <person name="Vandenbol M."/>
            <person name="Vannier F."/>
            <person name="Vassarotti A."/>
            <person name="Viari A."/>
            <person name="Wambutt R."/>
            <person name="Wedler E."/>
            <person name="Wedler H."/>
            <person name="Weitzenegger T."/>
            <person name="Winters P."/>
            <person name="Wipat A."/>
            <person name="Yamamoto H."/>
            <person name="Yamane K."/>
            <person name="Yasumoto K."/>
            <person name="Yata K."/>
            <person name="Yoshida K."/>
            <person name="Yoshikawa H.-F."/>
            <person name="Zumstein E."/>
            <person name="Yoshikawa H."/>
            <person name="Danchin A."/>
        </authorList>
    </citation>
    <scope>NUCLEOTIDE SEQUENCE [LARGE SCALE GENOMIC DNA]</scope>
    <source>
        <strain>168</strain>
    </source>
</reference>
<gene>
    <name type="primary">yosB</name>
    <name type="ordered locus">BSU20180</name>
</gene>
<dbReference type="EMBL" id="AL009126">
    <property type="protein sequence ID" value="CAB13910.1"/>
    <property type="molecule type" value="Genomic_DNA"/>
</dbReference>
<dbReference type="RefSeq" id="NP_389900.1">
    <property type="nucleotide sequence ID" value="NC_000964.3"/>
</dbReference>
<dbReference type="RefSeq" id="WP_004399458.1">
    <property type="nucleotide sequence ID" value="NZ_OZ025638.1"/>
</dbReference>
<dbReference type="SMR" id="O31887"/>
<dbReference type="FunCoup" id="O31887">
    <property type="interactions" value="57"/>
</dbReference>
<dbReference type="STRING" id="224308.BSU20180"/>
<dbReference type="PaxDb" id="224308-BSU20180"/>
<dbReference type="EnsemblBacteria" id="CAB13910">
    <property type="protein sequence ID" value="CAB13910"/>
    <property type="gene ID" value="BSU_20180"/>
</dbReference>
<dbReference type="GeneID" id="939568"/>
<dbReference type="KEGG" id="bsu:BSU20180"/>
<dbReference type="PATRIC" id="fig|224308.179.peg.2208"/>
<dbReference type="InParanoid" id="O31887"/>
<dbReference type="OrthoDB" id="2894093at2"/>
<dbReference type="BioCyc" id="BSUB:BSU20180-MONOMER"/>
<dbReference type="Proteomes" id="UP000001570">
    <property type="component" value="Chromosome"/>
</dbReference>
<organism>
    <name type="scientific">Bacillus subtilis (strain 168)</name>
    <dbReference type="NCBI Taxonomy" id="224308"/>
    <lineage>
        <taxon>Bacteria</taxon>
        <taxon>Bacillati</taxon>
        <taxon>Bacillota</taxon>
        <taxon>Bacilli</taxon>
        <taxon>Bacillales</taxon>
        <taxon>Bacillaceae</taxon>
        <taxon>Bacillus</taxon>
    </lineage>
</organism>
<accession>O31887</accession>